<feature type="chain" id="PRO_0000154257" description="Indole-3-glycerol phosphate synthase">
    <location>
        <begin position="1"/>
        <end position="260"/>
    </location>
</feature>
<keyword id="KW-0028">Amino-acid biosynthesis</keyword>
<keyword id="KW-0057">Aromatic amino acid biosynthesis</keyword>
<keyword id="KW-0210">Decarboxylase</keyword>
<keyword id="KW-0456">Lyase</keyword>
<keyword id="KW-0822">Tryptophan biosynthesis</keyword>
<name>TRPC_STAHJ</name>
<organism>
    <name type="scientific">Staphylococcus haemolyticus (strain JCSC1435)</name>
    <dbReference type="NCBI Taxonomy" id="279808"/>
    <lineage>
        <taxon>Bacteria</taxon>
        <taxon>Bacillati</taxon>
        <taxon>Bacillota</taxon>
        <taxon>Bacilli</taxon>
        <taxon>Bacillales</taxon>
        <taxon>Staphylococcaceae</taxon>
        <taxon>Staphylococcus</taxon>
    </lineage>
</organism>
<sequence>MTILSEIVDYKEQLLKDGYYHDKLQNLKGVKHKNKSRLTDALIKNDNLTLIAEIKSKSPSVKAFQQTNIIKQVSDYERYGANAISVLTDERYFGGSFERLQQISETTQLPVLCKDFIIDPLQIDVAQKAGASIILLIVNILTDEKLRQLYQYASSKGLEVLVEVHDGIELQRAYQLNPQIIGVNNRDLKSFNTDVKHTNQILKCKKENYLYISESGIHSQQEVKQIVKSGIDGLLVGGALMNCNELEHFIPSLKLKKVKQ</sequence>
<reference key="1">
    <citation type="journal article" date="2005" name="J. Bacteriol.">
        <title>Whole-genome sequencing of Staphylococcus haemolyticus uncovers the extreme plasticity of its genome and the evolution of human-colonizing staphylococcal species.</title>
        <authorList>
            <person name="Takeuchi F."/>
            <person name="Watanabe S."/>
            <person name="Baba T."/>
            <person name="Yuzawa H."/>
            <person name="Ito T."/>
            <person name="Morimoto Y."/>
            <person name="Kuroda M."/>
            <person name="Cui L."/>
            <person name="Takahashi M."/>
            <person name="Ankai A."/>
            <person name="Baba S."/>
            <person name="Fukui S."/>
            <person name="Lee J.C."/>
            <person name="Hiramatsu K."/>
        </authorList>
    </citation>
    <scope>NUCLEOTIDE SEQUENCE [LARGE SCALE GENOMIC DNA]</scope>
    <source>
        <strain>JCSC1435</strain>
    </source>
</reference>
<dbReference type="EC" id="4.1.1.48" evidence="1"/>
<dbReference type="EMBL" id="AP006716">
    <property type="protein sequence ID" value="BAE04848.1"/>
    <property type="molecule type" value="Genomic_DNA"/>
</dbReference>
<dbReference type="RefSeq" id="WP_011275830.1">
    <property type="nucleotide sequence ID" value="NC_007168.1"/>
</dbReference>
<dbReference type="SMR" id="Q4L677"/>
<dbReference type="GeneID" id="93780926"/>
<dbReference type="KEGG" id="sha:SH1539"/>
<dbReference type="eggNOG" id="COG0134">
    <property type="taxonomic scope" value="Bacteria"/>
</dbReference>
<dbReference type="HOGENOM" id="CLU_034247_2_1_9"/>
<dbReference type="OrthoDB" id="9804217at2"/>
<dbReference type="UniPathway" id="UPA00035">
    <property type="reaction ID" value="UER00043"/>
</dbReference>
<dbReference type="Proteomes" id="UP000000543">
    <property type="component" value="Chromosome"/>
</dbReference>
<dbReference type="GO" id="GO:0004425">
    <property type="term" value="F:indole-3-glycerol-phosphate synthase activity"/>
    <property type="evidence" value="ECO:0007669"/>
    <property type="project" value="UniProtKB-UniRule"/>
</dbReference>
<dbReference type="GO" id="GO:0004640">
    <property type="term" value="F:phosphoribosylanthranilate isomerase activity"/>
    <property type="evidence" value="ECO:0007669"/>
    <property type="project" value="TreeGrafter"/>
</dbReference>
<dbReference type="GO" id="GO:0000162">
    <property type="term" value="P:L-tryptophan biosynthetic process"/>
    <property type="evidence" value="ECO:0007669"/>
    <property type="project" value="UniProtKB-UniRule"/>
</dbReference>
<dbReference type="CDD" id="cd00331">
    <property type="entry name" value="IGPS"/>
    <property type="match status" value="1"/>
</dbReference>
<dbReference type="FunFam" id="3.20.20.70:FF:000024">
    <property type="entry name" value="Indole-3-glycerol phosphate synthase"/>
    <property type="match status" value="1"/>
</dbReference>
<dbReference type="Gene3D" id="3.20.20.70">
    <property type="entry name" value="Aldolase class I"/>
    <property type="match status" value="1"/>
</dbReference>
<dbReference type="HAMAP" id="MF_00134_B">
    <property type="entry name" value="IGPS_B"/>
    <property type="match status" value="1"/>
</dbReference>
<dbReference type="InterPro" id="IPR013785">
    <property type="entry name" value="Aldolase_TIM"/>
</dbReference>
<dbReference type="InterPro" id="IPR045186">
    <property type="entry name" value="Indole-3-glycerol_P_synth"/>
</dbReference>
<dbReference type="InterPro" id="IPR013798">
    <property type="entry name" value="Indole-3-glycerol_P_synth_dom"/>
</dbReference>
<dbReference type="InterPro" id="IPR001468">
    <property type="entry name" value="Indole-3-GlycerolPSynthase_CS"/>
</dbReference>
<dbReference type="InterPro" id="IPR011060">
    <property type="entry name" value="RibuloseP-bd_barrel"/>
</dbReference>
<dbReference type="NCBIfam" id="NF001371">
    <property type="entry name" value="PRK00278.1-3"/>
    <property type="match status" value="1"/>
</dbReference>
<dbReference type="PANTHER" id="PTHR22854:SF2">
    <property type="entry name" value="INDOLE-3-GLYCEROL-PHOSPHATE SYNTHASE"/>
    <property type="match status" value="1"/>
</dbReference>
<dbReference type="PANTHER" id="PTHR22854">
    <property type="entry name" value="TRYPTOPHAN BIOSYNTHESIS PROTEIN"/>
    <property type="match status" value="1"/>
</dbReference>
<dbReference type="Pfam" id="PF00218">
    <property type="entry name" value="IGPS"/>
    <property type="match status" value="1"/>
</dbReference>
<dbReference type="SUPFAM" id="SSF51366">
    <property type="entry name" value="Ribulose-phoshate binding barrel"/>
    <property type="match status" value="1"/>
</dbReference>
<dbReference type="PROSITE" id="PS00614">
    <property type="entry name" value="IGPS"/>
    <property type="match status" value="1"/>
</dbReference>
<proteinExistence type="inferred from homology"/>
<accession>Q4L677</accession>
<evidence type="ECO:0000255" key="1">
    <source>
        <dbReference type="HAMAP-Rule" id="MF_00134"/>
    </source>
</evidence>
<protein>
    <recommendedName>
        <fullName evidence="1">Indole-3-glycerol phosphate synthase</fullName>
        <shortName evidence="1">IGPS</shortName>
        <ecNumber evidence="1">4.1.1.48</ecNumber>
    </recommendedName>
</protein>
<comment type="catalytic activity">
    <reaction evidence="1">
        <text>1-(2-carboxyphenylamino)-1-deoxy-D-ribulose 5-phosphate + H(+) = (1S,2R)-1-C-(indol-3-yl)glycerol 3-phosphate + CO2 + H2O</text>
        <dbReference type="Rhea" id="RHEA:23476"/>
        <dbReference type="ChEBI" id="CHEBI:15377"/>
        <dbReference type="ChEBI" id="CHEBI:15378"/>
        <dbReference type="ChEBI" id="CHEBI:16526"/>
        <dbReference type="ChEBI" id="CHEBI:58613"/>
        <dbReference type="ChEBI" id="CHEBI:58866"/>
        <dbReference type="EC" id="4.1.1.48"/>
    </reaction>
</comment>
<comment type="pathway">
    <text evidence="1">Amino-acid biosynthesis; L-tryptophan biosynthesis; L-tryptophan from chorismate: step 4/5.</text>
</comment>
<comment type="similarity">
    <text evidence="1">Belongs to the TrpC family.</text>
</comment>
<gene>
    <name evidence="1" type="primary">trpC</name>
    <name type="ordered locus">SH1539</name>
</gene>